<keyword id="KW-0903">Direct protein sequencing</keyword>
<keyword id="KW-1015">Disulfide bond</keyword>
<keyword id="KW-0325">Glycoprotein</keyword>
<keyword id="KW-0597">Phosphoprotein</keyword>
<keyword id="KW-1185">Reference proteome</keyword>
<keyword id="KW-0732">Signal</keyword>
<keyword id="KW-0758">Storage protein</keyword>
<reference key="1">
    <citation type="journal article" date="1987" name="Nucleic Acids Res.">
        <title>Precursor-product relationship between vitellogenin and the yolk proteins as derived from the complete sequence of a Xenopus vitellogenin gene.</title>
        <authorList>
            <person name="Gerber-Huber S."/>
            <person name="Nardelli D."/>
            <person name="Haefliger J.-A."/>
            <person name="Cooper D.N."/>
            <person name="Givel F."/>
            <person name="Germond J.-E."/>
            <person name="Engel J."/>
            <person name="Green N.M."/>
            <person name="Wahli W."/>
        </authorList>
    </citation>
    <scope>NUCLEOTIDE SEQUENCE [GENOMIC DNA]</scope>
    <scope>PROTEIN SEQUENCE OF 16-28</scope>
</reference>
<reference key="2">
    <citation type="journal article" date="1994" name="Biochem. Biophys. Res. Commun.">
        <title>Xenopus laevis vitellogenin is a zinc protein.</title>
        <authorList>
            <person name="Montorzi M."/>
            <person name="Falchuk K.H."/>
            <person name="Vallee B.L."/>
        </authorList>
    </citation>
    <scope>PROTEIN SEQUENCE OF 16-25</scope>
</reference>
<reference key="3">
    <citation type="journal article" date="1987" name="J. Biol. Chem.">
        <title>Comparison of the organization and fine structure of a chicken and a Xenopus laevis vitellogenin gene.</title>
        <authorList>
            <person name="Nardelli D."/>
            <person name="Het Schip F.D."/>
            <person name="Gerber-Huber S."/>
            <person name="Haefliger J.-A."/>
            <person name="Gruber M."/>
            <person name="Ab G."/>
            <person name="Wahli W."/>
        </authorList>
    </citation>
    <scope>NUCLEOTIDE SEQUENCE [GENOMIC DNA]</scope>
</reference>
<reference key="4">
    <citation type="journal article" date="1990" name="J. Mol. Biol.">
        <title>Placement of small lipovitellin subunits within the vitellogenin precursor in Xenopus laevis.</title>
        <authorList>
            <person name="Wallace R.A."/>
            <person name="Hoch K.L."/>
            <person name="Carnevali O."/>
        </authorList>
    </citation>
    <scope>PROTEIN SEQUENCE OF 1291-1302</scope>
</reference>
<reference key="5">
    <citation type="journal article" date="1984" name="Nucleic Acids Res.">
        <title>Sequence homologies in the region preceding the transcription initiation site of the liver estrogen-responsive vitellogenin and apo-VLDLII genes.</title>
        <authorList>
            <person name="Walker P."/>
            <person name="Germond J.-E."/>
            <person name="Brown-Luedi M."/>
            <person name="Givel F."/>
            <person name="Wahli W."/>
        </authorList>
    </citation>
    <scope>NUCLEOTIDE SEQUENCE [GENOMIC DNA] OF 1-72</scope>
</reference>
<feature type="signal peptide" evidence="5 6">
    <location>
        <begin position="1"/>
        <end position="15"/>
    </location>
</feature>
<feature type="chain" id="PRO_0000041585" description="Vitellogenin-A2">
    <location>
        <begin position="16"/>
        <end position="1807"/>
    </location>
</feature>
<feature type="chain" id="PRO_0000041586" description="Lipovitellin I">
    <location>
        <begin position="16"/>
        <end status="unknown"/>
    </location>
</feature>
<feature type="chain" id="PRO_0000041587" description="Phosvitin">
    <location>
        <begin status="unknown"/>
        <end position="1290"/>
    </location>
</feature>
<feature type="chain" id="PRO_0000041588" description="Lipovitellin II">
    <location>
        <begin position="1291"/>
        <end status="unknown"/>
    </location>
</feature>
<feature type="domain" description="Vitellogenin" evidence="2">
    <location>
        <begin position="24"/>
        <end position="664"/>
    </location>
</feature>
<feature type="domain" description="VWFD" evidence="3">
    <location>
        <begin position="1536"/>
        <end position="1714"/>
    </location>
</feature>
<feature type="region of interest" description="Disordered" evidence="4">
    <location>
        <begin position="953"/>
        <end position="974"/>
    </location>
</feature>
<feature type="region of interest" description="Disordered" evidence="4">
    <location>
        <begin position="1095"/>
        <end position="1320"/>
    </location>
</feature>
<feature type="compositionally biased region" description="Basic residues" evidence="4">
    <location>
        <begin position="1101"/>
        <end position="1111"/>
    </location>
</feature>
<feature type="compositionally biased region" description="Basic and acidic residues" evidence="4">
    <location>
        <begin position="1112"/>
        <end position="1123"/>
    </location>
</feature>
<feature type="compositionally biased region" description="Low complexity" evidence="4">
    <location>
        <begin position="1126"/>
        <end position="1163"/>
    </location>
</feature>
<feature type="compositionally biased region" description="Basic and acidic residues" evidence="4">
    <location>
        <begin position="1187"/>
        <end position="1198"/>
    </location>
</feature>
<feature type="compositionally biased region" description="Low complexity" evidence="4">
    <location>
        <begin position="1205"/>
        <end position="1232"/>
    </location>
</feature>
<feature type="compositionally biased region" description="Basic and acidic residues" evidence="4">
    <location>
        <begin position="1233"/>
        <end position="1247"/>
    </location>
</feature>
<feature type="compositionally biased region" description="Low complexity" evidence="4">
    <location>
        <begin position="1263"/>
        <end position="1276"/>
    </location>
</feature>
<feature type="compositionally biased region" description="Low complexity" evidence="4">
    <location>
        <begin position="1309"/>
        <end position="1320"/>
    </location>
</feature>
<feature type="glycosylation site" description="N-linked (GlcNAc...) asparagine" evidence="1">
    <location>
        <position position="1094"/>
    </location>
</feature>
<feature type="disulfide bond" evidence="3">
    <location>
        <begin position="1538"/>
        <end position="1677"/>
    </location>
</feature>
<feature type="disulfide bond" evidence="3">
    <location>
        <begin position="1561"/>
        <end position="1713"/>
    </location>
</feature>
<feature type="sequence variant">
    <original>V</original>
    <variation>I</variation>
    <location>
        <position position="662"/>
    </location>
</feature>
<feature type="sequence variant">
    <original>A</original>
    <variation>T</variation>
    <location>
        <position position="958"/>
    </location>
</feature>
<feature type="sequence variant">
    <original>E</original>
    <variation>K</variation>
    <location>
        <position position="1572"/>
    </location>
</feature>
<feature type="sequence conflict" description="In Ref. 5; CAA25028." evidence="7" ref="5">
    <original>I</original>
    <variation>V</variation>
    <location>
        <position position="72"/>
    </location>
</feature>
<sequence length="1807" mass="201545">MKGIVLALLLALAGSERTHIEPVFSESKISVYNYEAVILNGFPESGLSRAGIKINCKVEISAYAQRSYFLKIQSPEIKEYNGVWPKDPFTRSSKLTQALAEQLTKPARFEYSNGRVGDIFVADDVSDTVANIYRGILNLLQVTIKKSQDVYDLQESSVGGICHTRYVIQEDKRGDQIRIIKSTDFNNCQDKVSKTIGLELAEFCHSCKQLNRVIQGAATYTYKLKGRDQGTVIMEVTARQVLQVTPFAERHGAATMESRQVLAWVGSKSGQLTPPQIQLKNRGNLHYQFASELHQMPIHLMKTKSPEAQAVEVLQHLVQDTQQHIREDAPAKFLQLVQLLRASNFENLQALWKQFAQRTQYRRCLLDALPMAGTVDCLKFIKQLIHNEELTTQEAAVLITFAMRSARPGQRNFQISADLVQDSKVQKYSTVHKAAILAYGTMVRRYCDQLSSCPEHALEPLHELAAEAANKGHYEDIALALKALGNAGQPESIKRIQKFLPGFSSSADQLPVRIQTDAVMALRNIAKEDPRKVQEILLQIFMDRDVRTEVRMMACLALFETRPGLATVTAIANVAARESKTNLQLASFTFSQMKALSKSSVPHLEPLAAACSVALKILNPSLDNLGYRYSKVMRVDTFKYNLMAGAAAKVFIMNSANTMFPVFILAKFREYTSLVENDDIEIGIRGEGIEEFLRKQNIQFANFPMRKKISQIVKSLLGFKGLPSQVPLISGYIKLFGQEIAFTELNKEVIQNTIQALNQPAERHTMIRNVLNKLLNGVVGQYARRWMTWEYRHIIPTTVGLPAELSLYQSAIVHAAVNSDVKVKPTPSGDFSAAQLLESQIQLNGEVKPSVLVHTVATMGINSPLFQAGIEFHGKVHAHLPAKFTAFLDMKDRNFKIETPPFQQENHLVEIRAQTFAFTRNIADLDSARKTLVVPRNNEQNILKKHFETTGRTSAEGASMMEDSSEMGPKKYSAEPGHHQYAPNINSYDACTKFSKAGVHLCIQCKTHNAASRRNTIFYQAVGEHDFKLTMKPAHTEGAIEKLQLEITAGPKAASKIMGLVEVEGTEGEPMDETAVTKRLKMILGIDESRKDTNETALYRSKQKKKNKIHNRRLDAEVVEARKQQSSLSSSSSSSSSSSSSSSSSSSSSSSSSPSSSSSSSYSKRSKRREHNPHHQRESSSSSSQEQNKKRNLQENRKHGQKGMSSSSSSSSSSSSSSSSSSSSSSSSSSSSEENRPHKNRQHDNKQAKMQSNQHQQKKNKFSESSSSSSSSSSSEMWNKKKHHRNFYDLNFRRTARTKGTEHRGSRLSSSSESSSSSSESAYRHKAKFLGDKEPPVLVVTFKAVRNDNTKQGYQMVVYQEYHSSKQQIQAYVMDISKTRWAACFDAVVVNPHEAQASLKWGQNCQDYKINMKAETGNFGNQPALRVTANWPKIPSKWKSTGKVVGEYVPGAMYMMGFQGEYKRNSQRQVKLVFALSSPRTCDVVIRIPRLTVYYRALRLPVPIPVGHHAKENVLQTPTWNIFAEAPKLIMDSIQGECKVAQDQITTFNGVDLASALPENCYNVLAQDCSPEMKFMVLMRNSKESPNHKDINVKLGEYDIDMYYSADAFKMKINNLEVSEEHLPYKSFNYPTVEIKKKGNGVSLSASEYGIDSLDYDGLTFKFRPTIWMKGKTCGICGHNDDESEKELQMPDGSVAKDQMRFIHSWILPAESCSEGCNLKHTLVKLEKAIATDGAKAKCYSVQPVLRCAKGCSPVKTVEVSTGFHCLPSDVSLDLPEGQIRLEKSEDFSEKVEAHTACSCETSPCAA</sequence>
<protein>
    <recommendedName>
        <fullName>Vitellogenin-A2</fullName>
        <shortName>VTG A2</shortName>
    </recommendedName>
    <component>
        <recommendedName>
            <fullName>Lipovitellin I</fullName>
        </recommendedName>
    </component>
    <component>
        <recommendedName>
            <fullName>Lipovitellin II</fullName>
        </recommendedName>
    </component>
    <component>
        <recommendedName>
            <fullName>Phosvitin</fullName>
        </recommendedName>
    </component>
</protein>
<dbReference type="EMBL" id="Y00354">
    <property type="protein sequence ID" value="CAA68433.1"/>
    <property type="molecule type" value="Genomic_DNA"/>
</dbReference>
<dbReference type="EMBL" id="M18061">
    <property type="protein sequence ID" value="AAA49982.1"/>
    <property type="molecule type" value="Genomic_DNA"/>
</dbReference>
<dbReference type="EMBL" id="X00205">
    <property type="protein sequence ID" value="CAA25028.1"/>
    <property type="molecule type" value="Genomic_DNA"/>
</dbReference>
<dbReference type="PIR" id="S03124">
    <property type="entry name" value="S03124"/>
</dbReference>
<dbReference type="RefSeq" id="NP_001152753.1">
    <property type="nucleotide sequence ID" value="NM_001159281.1"/>
</dbReference>
<dbReference type="SMR" id="P18709"/>
<dbReference type="BioGRID" id="674349">
    <property type="interactions" value="1"/>
</dbReference>
<dbReference type="GeneID" id="100037071"/>
<dbReference type="KEGG" id="xla:100037071"/>
<dbReference type="AGR" id="Xenbase:XB-GENE-5791437"/>
<dbReference type="CTD" id="100037071"/>
<dbReference type="Xenbase" id="XB-GENE-5791437">
    <property type="gene designation" value="vtga2.L"/>
</dbReference>
<dbReference type="OMA" id="FIMNSAN"/>
<dbReference type="OrthoDB" id="5956066at2759"/>
<dbReference type="Proteomes" id="UP000186698">
    <property type="component" value="Chromosome 4L"/>
</dbReference>
<dbReference type="Bgee" id="100037071">
    <property type="expression patterns" value="Expressed in liver and 8 other cell types or tissues"/>
</dbReference>
<dbReference type="GO" id="GO:0005319">
    <property type="term" value="F:lipid transporter activity"/>
    <property type="evidence" value="ECO:0000318"/>
    <property type="project" value="GO_Central"/>
</dbReference>
<dbReference type="GO" id="GO:0045735">
    <property type="term" value="F:nutrient reservoir activity"/>
    <property type="evidence" value="ECO:0007669"/>
    <property type="project" value="UniProtKB-KW"/>
</dbReference>
<dbReference type="GO" id="GO:0071391">
    <property type="term" value="P:cellular response to estrogen stimulus"/>
    <property type="evidence" value="ECO:0000318"/>
    <property type="project" value="GO_Central"/>
</dbReference>
<dbReference type="GO" id="GO:0032355">
    <property type="term" value="P:response to estradiol"/>
    <property type="evidence" value="ECO:0000318"/>
    <property type="project" value="GO_Central"/>
</dbReference>
<dbReference type="FunFam" id="1.25.10.20:FF:000002">
    <property type="entry name" value="Vitellogenin 7"/>
    <property type="match status" value="1"/>
</dbReference>
<dbReference type="FunFam" id="2.30.230.10:FF:000002">
    <property type="entry name" value="Vitellogenin 7"/>
    <property type="match status" value="1"/>
</dbReference>
<dbReference type="FunFam" id="2.20.90.10:FF:000004">
    <property type="entry name" value="Vitellogenin A2"/>
    <property type="match status" value="1"/>
</dbReference>
<dbReference type="Gene3D" id="2.30.230.10">
    <property type="entry name" value="Lipovitellin, beta-sheet shell regions, chain A"/>
    <property type="match status" value="1"/>
</dbReference>
<dbReference type="Gene3D" id="2.20.80.10">
    <property type="entry name" value="Lipovitellin-phosvitin complex, chain A, domain 4"/>
    <property type="match status" value="1"/>
</dbReference>
<dbReference type="Gene3D" id="2.20.50.20">
    <property type="entry name" value="Lipovitellin. Chain A, domain 3"/>
    <property type="match status" value="1"/>
</dbReference>
<dbReference type="Gene3D" id="2.20.90.10">
    <property type="entry name" value="Vitellinogen, beta-sheet shell domain"/>
    <property type="match status" value="1"/>
</dbReference>
<dbReference type="Gene3D" id="1.25.10.20">
    <property type="entry name" value="Vitellinogen, superhelical"/>
    <property type="match status" value="1"/>
</dbReference>
<dbReference type="InterPro" id="IPR015819">
    <property type="entry name" value="Lipid_transp_b-sht_shell"/>
</dbReference>
<dbReference type="InterPro" id="IPR011030">
    <property type="entry name" value="Lipovitellin_superhlx_dom"/>
</dbReference>
<dbReference type="InterPro" id="IPR015816">
    <property type="entry name" value="Vitellinogen_b-sht_N"/>
</dbReference>
<dbReference type="InterPro" id="IPR015258">
    <property type="entry name" value="Vitellinogen_b-sht_shell"/>
</dbReference>
<dbReference type="InterPro" id="IPR037088">
    <property type="entry name" value="Vitellinogen_b-sht_shell_sf"/>
</dbReference>
<dbReference type="InterPro" id="IPR015255">
    <property type="entry name" value="Vitellinogen_open_b-sht"/>
</dbReference>
<dbReference type="InterPro" id="IPR015817">
    <property type="entry name" value="Vitellinogen_open_b-sht_sub1"/>
</dbReference>
<dbReference type="InterPro" id="IPR050733">
    <property type="entry name" value="Vitellogenin/Apolipophorin"/>
</dbReference>
<dbReference type="InterPro" id="IPR001747">
    <property type="entry name" value="Vitellogenin_N"/>
</dbReference>
<dbReference type="InterPro" id="IPR001846">
    <property type="entry name" value="VWF_type-D"/>
</dbReference>
<dbReference type="PANTHER" id="PTHR23345:SF15">
    <property type="entry name" value="VITELLOGENIN 1-RELATED"/>
    <property type="match status" value="1"/>
</dbReference>
<dbReference type="PANTHER" id="PTHR23345">
    <property type="entry name" value="VITELLOGENIN-RELATED"/>
    <property type="match status" value="1"/>
</dbReference>
<dbReference type="Pfam" id="PF09175">
    <property type="entry name" value="Vit_b-sht_shell"/>
    <property type="match status" value="1"/>
</dbReference>
<dbReference type="Pfam" id="PF09172">
    <property type="entry name" value="Vit_open_b-sht"/>
    <property type="match status" value="1"/>
</dbReference>
<dbReference type="Pfam" id="PF01347">
    <property type="entry name" value="Vitellogenin_N"/>
    <property type="match status" value="1"/>
</dbReference>
<dbReference type="Pfam" id="PF00094">
    <property type="entry name" value="VWD"/>
    <property type="match status" value="1"/>
</dbReference>
<dbReference type="SMART" id="SM01169">
    <property type="entry name" value="DUF1943"/>
    <property type="match status" value="1"/>
</dbReference>
<dbReference type="SMART" id="SM01170">
    <property type="entry name" value="DUF1944"/>
    <property type="match status" value="1"/>
</dbReference>
<dbReference type="SMART" id="SM00638">
    <property type="entry name" value="LPD_N"/>
    <property type="match status" value="1"/>
</dbReference>
<dbReference type="SMART" id="SM00216">
    <property type="entry name" value="VWD"/>
    <property type="match status" value="1"/>
</dbReference>
<dbReference type="SUPFAM" id="SSF56968">
    <property type="entry name" value="Lipovitellin-phosvitin complex, beta-sheet shell regions"/>
    <property type="match status" value="3"/>
</dbReference>
<dbReference type="SUPFAM" id="SSF48431">
    <property type="entry name" value="Lipovitellin-phosvitin complex, superhelical domain"/>
    <property type="match status" value="1"/>
</dbReference>
<dbReference type="PROSITE" id="PS51211">
    <property type="entry name" value="VITELLOGENIN"/>
    <property type="match status" value="1"/>
</dbReference>
<dbReference type="PROSITE" id="PS51233">
    <property type="entry name" value="VWFD"/>
    <property type="match status" value="1"/>
</dbReference>
<accession>P18709</accession>
<accession>Q91895</accession>
<comment type="function">
    <text>Precursor of the major egg-yolk proteins that are sources of nutrients during early development of oviparous organisms.</text>
</comment>
<comment type="tissue specificity">
    <text>Produced by the liver, secreted into the blood and then sequestered by receptor mediated endocytosis into growing oocytes, where it is generally cleaved, giving rise to the respective yolk components.</text>
</comment>
<comment type="induction">
    <text>By steroids (estrogen).</text>
</comment>
<comment type="miscellaneous">
    <text>The serine-rich portion of vitellogenin encodes phosvitin (or two phosvettes). It is assumed to be phosphorylated to a level of about 80%.</text>
</comment>
<organism>
    <name type="scientific">Xenopus laevis</name>
    <name type="common">African clawed frog</name>
    <dbReference type="NCBI Taxonomy" id="8355"/>
    <lineage>
        <taxon>Eukaryota</taxon>
        <taxon>Metazoa</taxon>
        <taxon>Chordata</taxon>
        <taxon>Craniata</taxon>
        <taxon>Vertebrata</taxon>
        <taxon>Euteleostomi</taxon>
        <taxon>Amphibia</taxon>
        <taxon>Batrachia</taxon>
        <taxon>Anura</taxon>
        <taxon>Pipoidea</taxon>
        <taxon>Pipidae</taxon>
        <taxon>Xenopodinae</taxon>
        <taxon>Xenopus</taxon>
        <taxon>Xenopus</taxon>
    </lineage>
</organism>
<name>VITA2_XENLA</name>
<evidence type="ECO:0000255" key="1"/>
<evidence type="ECO:0000255" key="2">
    <source>
        <dbReference type="PROSITE-ProRule" id="PRU00557"/>
    </source>
</evidence>
<evidence type="ECO:0000255" key="3">
    <source>
        <dbReference type="PROSITE-ProRule" id="PRU00580"/>
    </source>
</evidence>
<evidence type="ECO:0000256" key="4">
    <source>
        <dbReference type="SAM" id="MobiDB-lite"/>
    </source>
</evidence>
<evidence type="ECO:0000269" key="5">
    <source>
    </source>
</evidence>
<evidence type="ECO:0000269" key="6">
    <source>
    </source>
</evidence>
<evidence type="ECO:0000305" key="7"/>
<proteinExistence type="evidence at protein level"/>